<reference key="1">
    <citation type="journal article" date="2005" name="BMC Biol.">
        <title>The sequence of rice chromosomes 11 and 12, rich in disease resistance genes and recent gene duplications.</title>
        <authorList>
            <consortium name="The rice chromosomes 11 and 12 sequencing consortia"/>
        </authorList>
    </citation>
    <scope>NUCLEOTIDE SEQUENCE [LARGE SCALE GENOMIC DNA]</scope>
    <source>
        <strain>cv. Nipponbare</strain>
    </source>
</reference>
<reference key="2">
    <citation type="journal article" date="2005" name="Nature">
        <title>The map-based sequence of the rice genome.</title>
        <authorList>
            <consortium name="International rice genome sequencing project (IRGSP)"/>
        </authorList>
    </citation>
    <scope>NUCLEOTIDE SEQUENCE [LARGE SCALE GENOMIC DNA]</scope>
    <source>
        <strain>cv. Nipponbare</strain>
    </source>
</reference>
<reference key="3">
    <citation type="journal article" date="2008" name="Nucleic Acids Res.">
        <title>The rice annotation project database (RAP-DB): 2008 update.</title>
        <authorList>
            <consortium name="The rice annotation project (RAP)"/>
        </authorList>
    </citation>
    <scope>GENOME REANNOTATION</scope>
    <source>
        <strain>cv. Nipponbare</strain>
    </source>
</reference>
<reference key="4">
    <citation type="journal article" date="2013" name="Rice">
        <title>Improvement of the Oryza sativa Nipponbare reference genome using next generation sequence and optical map data.</title>
        <authorList>
            <person name="Kawahara Y."/>
            <person name="de la Bastide M."/>
            <person name="Hamilton J.P."/>
            <person name="Kanamori H."/>
            <person name="McCombie W.R."/>
            <person name="Ouyang S."/>
            <person name="Schwartz D.C."/>
            <person name="Tanaka T."/>
            <person name="Wu J."/>
            <person name="Zhou S."/>
            <person name="Childs K.L."/>
            <person name="Davidson R.M."/>
            <person name="Lin H."/>
            <person name="Quesada-Ocampo L."/>
            <person name="Vaillancourt B."/>
            <person name="Sakai H."/>
            <person name="Lee S.S."/>
            <person name="Kim J."/>
            <person name="Numa H."/>
            <person name="Itoh T."/>
            <person name="Buell C.R."/>
            <person name="Matsumoto T."/>
        </authorList>
    </citation>
    <scope>GENOME REANNOTATION</scope>
    <source>
        <strain>cv. Nipponbare</strain>
    </source>
</reference>
<reference key="5">
    <citation type="journal article" date="2005" name="PLoS Biol.">
        <title>The genomes of Oryza sativa: a history of duplications.</title>
        <authorList>
            <person name="Yu J."/>
            <person name="Wang J."/>
            <person name="Lin W."/>
            <person name="Li S."/>
            <person name="Li H."/>
            <person name="Zhou J."/>
            <person name="Ni P."/>
            <person name="Dong W."/>
            <person name="Hu S."/>
            <person name="Zeng C."/>
            <person name="Zhang J."/>
            <person name="Zhang Y."/>
            <person name="Li R."/>
            <person name="Xu Z."/>
            <person name="Li S."/>
            <person name="Li X."/>
            <person name="Zheng H."/>
            <person name="Cong L."/>
            <person name="Lin L."/>
            <person name="Yin J."/>
            <person name="Geng J."/>
            <person name="Li G."/>
            <person name="Shi J."/>
            <person name="Liu J."/>
            <person name="Lv H."/>
            <person name="Li J."/>
            <person name="Wang J."/>
            <person name="Deng Y."/>
            <person name="Ran L."/>
            <person name="Shi X."/>
            <person name="Wang X."/>
            <person name="Wu Q."/>
            <person name="Li C."/>
            <person name="Ren X."/>
            <person name="Wang J."/>
            <person name="Wang X."/>
            <person name="Li D."/>
            <person name="Liu D."/>
            <person name="Zhang X."/>
            <person name="Ji Z."/>
            <person name="Zhao W."/>
            <person name="Sun Y."/>
            <person name="Zhang Z."/>
            <person name="Bao J."/>
            <person name="Han Y."/>
            <person name="Dong L."/>
            <person name="Ji J."/>
            <person name="Chen P."/>
            <person name="Wu S."/>
            <person name="Liu J."/>
            <person name="Xiao Y."/>
            <person name="Bu D."/>
            <person name="Tan J."/>
            <person name="Yang L."/>
            <person name="Ye C."/>
            <person name="Zhang J."/>
            <person name="Xu J."/>
            <person name="Zhou Y."/>
            <person name="Yu Y."/>
            <person name="Zhang B."/>
            <person name="Zhuang S."/>
            <person name="Wei H."/>
            <person name="Liu B."/>
            <person name="Lei M."/>
            <person name="Yu H."/>
            <person name="Li Y."/>
            <person name="Xu H."/>
            <person name="Wei S."/>
            <person name="He X."/>
            <person name="Fang L."/>
            <person name="Zhang Z."/>
            <person name="Zhang Y."/>
            <person name="Huang X."/>
            <person name="Su Z."/>
            <person name="Tong W."/>
            <person name="Li J."/>
            <person name="Tong Z."/>
            <person name="Li S."/>
            <person name="Ye J."/>
            <person name="Wang L."/>
            <person name="Fang L."/>
            <person name="Lei T."/>
            <person name="Chen C.-S."/>
            <person name="Chen H.-C."/>
            <person name="Xu Z."/>
            <person name="Li H."/>
            <person name="Huang H."/>
            <person name="Zhang F."/>
            <person name="Xu H."/>
            <person name="Li N."/>
            <person name="Zhao C."/>
            <person name="Li S."/>
            <person name="Dong L."/>
            <person name="Huang Y."/>
            <person name="Li L."/>
            <person name="Xi Y."/>
            <person name="Qi Q."/>
            <person name="Li W."/>
            <person name="Zhang B."/>
            <person name="Hu W."/>
            <person name="Zhang Y."/>
            <person name="Tian X."/>
            <person name="Jiao Y."/>
            <person name="Liang X."/>
            <person name="Jin J."/>
            <person name="Gao L."/>
            <person name="Zheng W."/>
            <person name="Hao B."/>
            <person name="Liu S.-M."/>
            <person name="Wang W."/>
            <person name="Yuan L."/>
            <person name="Cao M."/>
            <person name="McDermott J."/>
            <person name="Samudrala R."/>
            <person name="Wang J."/>
            <person name="Wong G.K.-S."/>
            <person name="Yang H."/>
        </authorList>
    </citation>
    <scope>NUCLEOTIDE SEQUENCE [LARGE SCALE GENOMIC DNA]</scope>
    <source>
        <strain>cv. Nipponbare</strain>
    </source>
</reference>
<reference key="6">
    <citation type="journal article" date="2003" name="Science">
        <title>Collection, mapping, and annotation of over 28,000 cDNA clones from japonica rice.</title>
        <authorList>
            <consortium name="The rice full-length cDNA consortium"/>
        </authorList>
    </citation>
    <scope>NUCLEOTIDE SEQUENCE [LARGE SCALE MRNA]</scope>
    <source>
        <strain>cv. Nipponbare</strain>
    </source>
</reference>
<reference key="7">
    <citation type="journal article" date="2003" name="Plant Mol. Biol.">
        <title>Identification of rice (Oryza sativa) proteins linked to the cyclin-mediated regulation of the cell cycle.</title>
        <authorList>
            <person name="Cooper B."/>
            <person name="Hutchison D."/>
            <person name="Park S."/>
            <person name="Guimil S."/>
            <person name="Luginbuehl P."/>
            <person name="Ellero C."/>
            <person name="Goff S.A."/>
            <person name="Glazebrook J."/>
        </authorList>
    </citation>
    <scope>NUCLEOTIDE SEQUENCE [MRNA] OF 1-455</scope>
</reference>
<keyword id="KW-0175">Coiled coil</keyword>
<keyword id="KW-0963">Cytoplasm</keyword>
<keyword id="KW-0206">Cytoskeleton</keyword>
<keyword id="KW-0493">Microtubule</keyword>
<keyword id="KW-1185">Reference proteome</keyword>
<dbReference type="EMBL" id="DP000011">
    <property type="protein sequence ID" value="ABA99627.1"/>
    <property type="molecule type" value="Genomic_DNA"/>
</dbReference>
<dbReference type="EMBL" id="AP008218">
    <property type="protein sequence ID" value="BAF30417.1"/>
    <property type="molecule type" value="Genomic_DNA"/>
</dbReference>
<dbReference type="EMBL" id="AP014968">
    <property type="protein sequence ID" value="BAT18304.1"/>
    <property type="molecule type" value="Genomic_DNA"/>
</dbReference>
<dbReference type="EMBL" id="CM000149">
    <property type="protein sequence ID" value="EEE53684.1"/>
    <property type="molecule type" value="Genomic_DNA"/>
</dbReference>
<dbReference type="EMBL" id="AK066694">
    <property type="protein sequence ID" value="BAG90086.1"/>
    <property type="molecule type" value="mRNA"/>
</dbReference>
<dbReference type="EMBL" id="AY224566">
    <property type="protein sequence ID" value="AAO72686.1"/>
    <property type="molecule type" value="mRNA"/>
</dbReference>
<dbReference type="RefSeq" id="XP_015619348.1">
    <property type="nucleotide sequence ID" value="XM_015763862.1"/>
</dbReference>
<dbReference type="SMR" id="Q2QLI6"/>
<dbReference type="FunCoup" id="Q2QLI6">
    <property type="interactions" value="798"/>
</dbReference>
<dbReference type="STRING" id="39947.Q2QLI6"/>
<dbReference type="iPTMnet" id="Q2QLI6"/>
<dbReference type="PaxDb" id="39947-Q2QLI6"/>
<dbReference type="EnsemblPlants" id="Os12t0640900-01">
    <property type="protein sequence ID" value="Os12t0640900-01"/>
    <property type="gene ID" value="Os12g0640900"/>
</dbReference>
<dbReference type="Gramene" id="Os12t0640900-01">
    <property type="protein sequence ID" value="Os12t0640900-01"/>
    <property type="gene ID" value="Os12g0640900"/>
</dbReference>
<dbReference type="KEGG" id="dosa:Os12g0640900"/>
<dbReference type="eggNOG" id="ENOG502QTPA">
    <property type="taxonomic scope" value="Eukaryota"/>
</dbReference>
<dbReference type="HOGENOM" id="CLU_023069_0_0_1"/>
<dbReference type="InParanoid" id="Q2QLI6"/>
<dbReference type="OMA" id="NEYFYRT"/>
<dbReference type="OrthoDB" id="2014495at2759"/>
<dbReference type="Proteomes" id="UP000000763">
    <property type="component" value="Chromosome 12"/>
</dbReference>
<dbReference type="Proteomes" id="UP000007752">
    <property type="component" value="Chromosome 12"/>
</dbReference>
<dbReference type="Proteomes" id="UP000059680">
    <property type="component" value="Chromosome 12"/>
</dbReference>
<dbReference type="GO" id="GO:0005737">
    <property type="term" value="C:cytoplasm"/>
    <property type="evidence" value="ECO:0007669"/>
    <property type="project" value="UniProtKB-KW"/>
</dbReference>
<dbReference type="GO" id="GO:0005874">
    <property type="term" value="C:microtubule"/>
    <property type="evidence" value="ECO:0007669"/>
    <property type="project" value="UniProtKB-KW"/>
</dbReference>
<dbReference type="GO" id="GO:0008017">
    <property type="term" value="F:microtubule binding"/>
    <property type="evidence" value="ECO:0007669"/>
    <property type="project" value="InterPro"/>
</dbReference>
<dbReference type="GO" id="GO:0007010">
    <property type="term" value="P:cytoskeleton organization"/>
    <property type="evidence" value="ECO:0007669"/>
    <property type="project" value="InterPro"/>
</dbReference>
<dbReference type="InterPro" id="IPR009768">
    <property type="entry name" value="MAP70"/>
</dbReference>
<dbReference type="PANTHER" id="PTHR31246:SF32">
    <property type="entry name" value="MICROTUBULE-ASSOCIATED PROTEIN 70-1"/>
    <property type="match status" value="1"/>
</dbReference>
<dbReference type="PANTHER" id="PTHR31246">
    <property type="entry name" value="MICROTUBULE-ASSOCIATED PROTEIN 70-2"/>
    <property type="match status" value="1"/>
</dbReference>
<dbReference type="Pfam" id="PF07058">
    <property type="entry name" value="MAP70"/>
    <property type="match status" value="1"/>
</dbReference>
<sequence length="567" mass="63557">MADPYGDGKGLKQQQRQKLKPALEVEDFINLLHGSDPVRVELTRLENELQYKEKELGEAQAEIKALRLSERAREKAVEDLTEELTKVDGKLKLTESLLESKNLEAKKINDEKKAALAAQFAAEATLRRVHAAQKDDDMPPIEAILAPLEAELKLARHEIAKLQDDNRALDRLTKSKEAALLEAERTVQIALAKASLVDDLQNKNQELMKQIEICQEENKILDRMHRQKVAEVEKLTQTVRELEEAVLAGGAAANAVRDYQRKVQEMNEERKTLDRELARAKVSANRVAVVVANEWKDGNDKVMPVKQWLEERRILQGEMQQLRDKLAIAERAARSEAQLKDKFQLRLKVLEEGLRMSTTRTNVSAARRQSIGGADSLSKTNGFLSKRPSFQMRSSVSTTTTTLVNHAKGASKSFDGGCRSLDRYKGHVNGSGMNVSTDSSEDKESNNSDEKANEFTSVETEDTVSGLLYDTLQKEVIALRKACHEKDQSLKDKDDAVEMLAKKVDTLTKAMESEGKKRRMEVAAMEKEMAALRLEKEQDNKAKRFGSSSSQLPPGRTLPRSGSARNM</sequence>
<gene>
    <name type="primary">MAP70.1</name>
    <name type="ordered locus">Os12g0640900</name>
    <name type="ordered locus">LOC_Os12g44340</name>
    <name type="ORF">OsJ_37030</name>
</gene>
<accession>Q2QLI6</accession>
<accession>A0A0P0YCW5</accession>
<accession>Q84VC2</accession>
<evidence type="ECO:0000250" key="1"/>
<evidence type="ECO:0000255" key="2"/>
<evidence type="ECO:0000256" key="3">
    <source>
        <dbReference type="SAM" id="MobiDB-lite"/>
    </source>
</evidence>
<evidence type="ECO:0000305" key="4"/>
<proteinExistence type="evidence at transcript level"/>
<name>MP701_ORYSJ</name>
<protein>
    <recommendedName>
        <fullName>Microtubule-associated protein 70-1</fullName>
        <shortName>AtMAP70-1</shortName>
    </recommendedName>
    <alternativeName>
        <fullName>70 kDa microtubule-associated protein 1</fullName>
    </alternativeName>
</protein>
<feature type="chain" id="PRO_0000409462" description="Microtubule-associated protein 70-1">
    <location>
        <begin position="1"/>
        <end position="567"/>
    </location>
</feature>
<feature type="region of interest" description="Required for targeting to microtubules" evidence="1">
    <location>
        <begin position="220"/>
        <end position="440"/>
    </location>
</feature>
<feature type="region of interest" description="Disordered" evidence="3">
    <location>
        <begin position="425"/>
        <end position="457"/>
    </location>
</feature>
<feature type="region of interest" description="Disordered" evidence="3">
    <location>
        <begin position="534"/>
        <end position="567"/>
    </location>
</feature>
<feature type="coiled-coil region" evidence="2">
    <location>
        <begin position="38"/>
        <end position="341"/>
    </location>
</feature>
<feature type="coiled-coil region" evidence="2">
    <location>
        <begin position="516"/>
        <end position="545"/>
    </location>
</feature>
<feature type="compositionally biased region" description="Basic and acidic residues" evidence="3">
    <location>
        <begin position="440"/>
        <end position="453"/>
    </location>
</feature>
<feature type="sequence conflict" description="In Ref. 7; AAO72686." evidence="4" ref="7">
    <original>TT</original>
    <variation>HH</variation>
    <location>
        <begin position="399"/>
        <end position="400"/>
    </location>
</feature>
<organism>
    <name type="scientific">Oryza sativa subsp. japonica</name>
    <name type="common">Rice</name>
    <dbReference type="NCBI Taxonomy" id="39947"/>
    <lineage>
        <taxon>Eukaryota</taxon>
        <taxon>Viridiplantae</taxon>
        <taxon>Streptophyta</taxon>
        <taxon>Embryophyta</taxon>
        <taxon>Tracheophyta</taxon>
        <taxon>Spermatophyta</taxon>
        <taxon>Magnoliopsida</taxon>
        <taxon>Liliopsida</taxon>
        <taxon>Poales</taxon>
        <taxon>Poaceae</taxon>
        <taxon>BOP clade</taxon>
        <taxon>Oryzoideae</taxon>
        <taxon>Oryzeae</taxon>
        <taxon>Oryzinae</taxon>
        <taxon>Oryza</taxon>
        <taxon>Oryza sativa</taxon>
    </lineage>
</organism>
<comment type="function">
    <text evidence="1">Plant-specific protein that interact with microtubules.</text>
</comment>
<comment type="subcellular location">
    <subcellularLocation>
        <location evidence="1">Cytoplasm</location>
        <location evidence="1">Cytoskeleton</location>
    </subcellularLocation>
    <text>Associated to microtubules.</text>
</comment>
<comment type="similarity">
    <text evidence="4">Belongs to the MAP70 family.</text>
</comment>